<name>DNAA_CLOK1</name>
<keyword id="KW-0067">ATP-binding</keyword>
<keyword id="KW-0963">Cytoplasm</keyword>
<keyword id="KW-0235">DNA replication</keyword>
<keyword id="KW-0238">DNA-binding</keyword>
<keyword id="KW-0446">Lipid-binding</keyword>
<keyword id="KW-0547">Nucleotide-binding</keyword>
<feature type="chain" id="PRO_1000189791" description="Chromosomal replication initiator protein DnaA">
    <location>
        <begin position="1"/>
        <end position="451"/>
    </location>
</feature>
<feature type="region of interest" description="Domain I, interacts with DnaA modulators" evidence="1">
    <location>
        <begin position="1"/>
        <end position="73"/>
    </location>
</feature>
<feature type="region of interest" description="Domain II" evidence="1">
    <location>
        <begin position="73"/>
        <end position="112"/>
    </location>
</feature>
<feature type="region of interest" description="Domain III, AAA+ region" evidence="1">
    <location>
        <begin position="113"/>
        <end position="329"/>
    </location>
</feature>
<feature type="region of interest" description="Domain IV, binds dsDNA" evidence="1">
    <location>
        <begin position="330"/>
        <end position="451"/>
    </location>
</feature>
<feature type="binding site" evidence="1">
    <location>
        <position position="157"/>
    </location>
    <ligand>
        <name>ATP</name>
        <dbReference type="ChEBI" id="CHEBI:30616"/>
    </ligand>
</feature>
<feature type="binding site" evidence="1">
    <location>
        <position position="159"/>
    </location>
    <ligand>
        <name>ATP</name>
        <dbReference type="ChEBI" id="CHEBI:30616"/>
    </ligand>
</feature>
<feature type="binding site" evidence="1">
    <location>
        <position position="160"/>
    </location>
    <ligand>
        <name>ATP</name>
        <dbReference type="ChEBI" id="CHEBI:30616"/>
    </ligand>
</feature>
<feature type="binding site" evidence="1">
    <location>
        <position position="161"/>
    </location>
    <ligand>
        <name>ATP</name>
        <dbReference type="ChEBI" id="CHEBI:30616"/>
    </ligand>
</feature>
<organism>
    <name type="scientific">Clostridium kluyveri (strain NBRC 12016)</name>
    <dbReference type="NCBI Taxonomy" id="583346"/>
    <lineage>
        <taxon>Bacteria</taxon>
        <taxon>Bacillati</taxon>
        <taxon>Bacillota</taxon>
        <taxon>Clostridia</taxon>
        <taxon>Eubacteriales</taxon>
        <taxon>Clostridiaceae</taxon>
        <taxon>Clostridium</taxon>
    </lineage>
</organism>
<accession>B9DXS7</accession>
<gene>
    <name evidence="1" type="primary">dnaA</name>
    <name type="ordered locus">CKR_0001</name>
</gene>
<evidence type="ECO:0000255" key="1">
    <source>
        <dbReference type="HAMAP-Rule" id="MF_00377"/>
    </source>
</evidence>
<reference key="1">
    <citation type="submission" date="2005-09" db="EMBL/GenBank/DDBJ databases">
        <title>Complete genome sequence of Clostridium kluyveri and comparative genomics of Clostridia species.</title>
        <authorList>
            <person name="Inui M."/>
            <person name="Nonaka H."/>
            <person name="Shinoda Y."/>
            <person name="Ikenaga Y."/>
            <person name="Abe M."/>
            <person name="Naito K."/>
            <person name="Vertes A.A."/>
            <person name="Yukawa H."/>
        </authorList>
    </citation>
    <scope>NUCLEOTIDE SEQUENCE [LARGE SCALE GENOMIC DNA]</scope>
    <source>
        <strain>NBRC 12016</strain>
    </source>
</reference>
<proteinExistence type="inferred from homology"/>
<comment type="function">
    <text evidence="1">Plays an essential role in the initiation and regulation of chromosomal replication. ATP-DnaA binds to the origin of replication (oriC) to initiate formation of the DNA replication initiation complex once per cell cycle. Binds the DnaA box (a 9 base pair repeat at the origin) and separates the double-stranded (ds)DNA. Forms a right-handed helical filament on oriC DNA; dsDNA binds to the exterior of the filament while single-stranded (ss)DNA is stabiized in the filament's interior. The ATP-DnaA-oriC complex binds and stabilizes one strand of the AT-rich DNA unwinding element (DUE), permitting loading of DNA polymerase. After initiation quickly degrades to an ADP-DnaA complex that is not apt for DNA replication. Binds acidic phospholipids.</text>
</comment>
<comment type="subunit">
    <text evidence="1">Oligomerizes as a right-handed, spiral filament on DNA at oriC.</text>
</comment>
<comment type="subcellular location">
    <subcellularLocation>
        <location evidence="1">Cytoplasm</location>
    </subcellularLocation>
</comment>
<comment type="domain">
    <text evidence="1">Domain I is involved in oligomerization and binding regulators, domain II is flexibile and of varying length in different bacteria, domain III forms the AAA+ region, while domain IV binds dsDNA.</text>
</comment>
<comment type="similarity">
    <text evidence="1">Belongs to the DnaA family.</text>
</comment>
<protein>
    <recommendedName>
        <fullName evidence="1">Chromosomal replication initiator protein DnaA</fullName>
    </recommendedName>
</protein>
<dbReference type="EMBL" id="AP009049">
    <property type="protein sequence ID" value="BAH05052.1"/>
    <property type="molecule type" value="Genomic_DNA"/>
</dbReference>
<dbReference type="RefSeq" id="WP_011988614.1">
    <property type="nucleotide sequence ID" value="NC_011837.1"/>
</dbReference>
<dbReference type="SMR" id="B9DXS7"/>
<dbReference type="KEGG" id="ckr:CKR_0001"/>
<dbReference type="HOGENOM" id="CLU_026910_3_1_9"/>
<dbReference type="Proteomes" id="UP000007969">
    <property type="component" value="Chromosome"/>
</dbReference>
<dbReference type="GO" id="GO:0005737">
    <property type="term" value="C:cytoplasm"/>
    <property type="evidence" value="ECO:0007669"/>
    <property type="project" value="UniProtKB-SubCell"/>
</dbReference>
<dbReference type="GO" id="GO:0005886">
    <property type="term" value="C:plasma membrane"/>
    <property type="evidence" value="ECO:0007669"/>
    <property type="project" value="TreeGrafter"/>
</dbReference>
<dbReference type="GO" id="GO:0005524">
    <property type="term" value="F:ATP binding"/>
    <property type="evidence" value="ECO:0007669"/>
    <property type="project" value="UniProtKB-UniRule"/>
</dbReference>
<dbReference type="GO" id="GO:0016887">
    <property type="term" value="F:ATP hydrolysis activity"/>
    <property type="evidence" value="ECO:0007669"/>
    <property type="project" value="InterPro"/>
</dbReference>
<dbReference type="GO" id="GO:0003688">
    <property type="term" value="F:DNA replication origin binding"/>
    <property type="evidence" value="ECO:0007669"/>
    <property type="project" value="UniProtKB-UniRule"/>
</dbReference>
<dbReference type="GO" id="GO:0008289">
    <property type="term" value="F:lipid binding"/>
    <property type="evidence" value="ECO:0007669"/>
    <property type="project" value="UniProtKB-KW"/>
</dbReference>
<dbReference type="GO" id="GO:0006270">
    <property type="term" value="P:DNA replication initiation"/>
    <property type="evidence" value="ECO:0007669"/>
    <property type="project" value="UniProtKB-UniRule"/>
</dbReference>
<dbReference type="GO" id="GO:0006275">
    <property type="term" value="P:regulation of DNA replication"/>
    <property type="evidence" value="ECO:0007669"/>
    <property type="project" value="UniProtKB-UniRule"/>
</dbReference>
<dbReference type="CDD" id="cd00009">
    <property type="entry name" value="AAA"/>
    <property type="match status" value="1"/>
</dbReference>
<dbReference type="CDD" id="cd06571">
    <property type="entry name" value="Bac_DnaA_C"/>
    <property type="match status" value="1"/>
</dbReference>
<dbReference type="FunFam" id="1.10.1750.10:FF:000003">
    <property type="entry name" value="Chromosomal replication initiator protein DnaA"/>
    <property type="match status" value="1"/>
</dbReference>
<dbReference type="FunFam" id="1.10.8.60:FF:000003">
    <property type="entry name" value="Chromosomal replication initiator protein DnaA"/>
    <property type="match status" value="1"/>
</dbReference>
<dbReference type="FunFam" id="3.40.50.300:FF:000150">
    <property type="entry name" value="Chromosomal replication initiator protein DnaA"/>
    <property type="match status" value="1"/>
</dbReference>
<dbReference type="Gene3D" id="1.10.1750.10">
    <property type="match status" value="1"/>
</dbReference>
<dbReference type="Gene3D" id="1.10.8.60">
    <property type="match status" value="1"/>
</dbReference>
<dbReference type="Gene3D" id="3.30.300.180">
    <property type="match status" value="1"/>
</dbReference>
<dbReference type="Gene3D" id="3.40.50.300">
    <property type="entry name" value="P-loop containing nucleotide triphosphate hydrolases"/>
    <property type="match status" value="1"/>
</dbReference>
<dbReference type="HAMAP" id="MF_00377">
    <property type="entry name" value="DnaA_bact"/>
    <property type="match status" value="1"/>
</dbReference>
<dbReference type="InterPro" id="IPR003593">
    <property type="entry name" value="AAA+_ATPase"/>
</dbReference>
<dbReference type="InterPro" id="IPR001957">
    <property type="entry name" value="Chromosome_initiator_DnaA"/>
</dbReference>
<dbReference type="InterPro" id="IPR020591">
    <property type="entry name" value="Chromosome_initiator_DnaA-like"/>
</dbReference>
<dbReference type="InterPro" id="IPR018312">
    <property type="entry name" value="Chromosome_initiator_DnaA_CS"/>
</dbReference>
<dbReference type="InterPro" id="IPR013159">
    <property type="entry name" value="DnaA_C"/>
</dbReference>
<dbReference type="InterPro" id="IPR013317">
    <property type="entry name" value="DnaA_dom"/>
</dbReference>
<dbReference type="InterPro" id="IPR024633">
    <property type="entry name" value="DnaA_N_dom"/>
</dbReference>
<dbReference type="InterPro" id="IPR038454">
    <property type="entry name" value="DnaA_N_sf"/>
</dbReference>
<dbReference type="InterPro" id="IPR027417">
    <property type="entry name" value="P-loop_NTPase"/>
</dbReference>
<dbReference type="InterPro" id="IPR010921">
    <property type="entry name" value="Trp_repressor/repl_initiator"/>
</dbReference>
<dbReference type="NCBIfam" id="TIGR00362">
    <property type="entry name" value="DnaA"/>
    <property type="match status" value="1"/>
</dbReference>
<dbReference type="NCBIfam" id="NF010686">
    <property type="entry name" value="PRK14086.1"/>
    <property type="match status" value="1"/>
</dbReference>
<dbReference type="PANTHER" id="PTHR30050">
    <property type="entry name" value="CHROMOSOMAL REPLICATION INITIATOR PROTEIN DNAA"/>
    <property type="match status" value="1"/>
</dbReference>
<dbReference type="PANTHER" id="PTHR30050:SF2">
    <property type="entry name" value="CHROMOSOMAL REPLICATION INITIATOR PROTEIN DNAA"/>
    <property type="match status" value="1"/>
</dbReference>
<dbReference type="Pfam" id="PF00308">
    <property type="entry name" value="Bac_DnaA"/>
    <property type="match status" value="1"/>
</dbReference>
<dbReference type="Pfam" id="PF08299">
    <property type="entry name" value="Bac_DnaA_C"/>
    <property type="match status" value="1"/>
</dbReference>
<dbReference type="Pfam" id="PF11638">
    <property type="entry name" value="DnaA_N"/>
    <property type="match status" value="1"/>
</dbReference>
<dbReference type="PRINTS" id="PR00051">
    <property type="entry name" value="DNAA"/>
</dbReference>
<dbReference type="SMART" id="SM00382">
    <property type="entry name" value="AAA"/>
    <property type="match status" value="1"/>
</dbReference>
<dbReference type="SMART" id="SM00760">
    <property type="entry name" value="Bac_DnaA_C"/>
    <property type="match status" value="1"/>
</dbReference>
<dbReference type="SUPFAM" id="SSF52540">
    <property type="entry name" value="P-loop containing nucleoside triphosphate hydrolases"/>
    <property type="match status" value="1"/>
</dbReference>
<dbReference type="SUPFAM" id="SSF48295">
    <property type="entry name" value="TrpR-like"/>
    <property type="match status" value="1"/>
</dbReference>
<dbReference type="PROSITE" id="PS01008">
    <property type="entry name" value="DNAA"/>
    <property type="match status" value="1"/>
</dbReference>
<sequence length="451" mass="51307">MNAHPKEIWEQCLNIIKGETTEVSFNTWIKSITPISIENDTFMLTVPNDLTKGILSNKYTDLIIRSLQMVTSQKYNVKFLISSELPEEFLTLDTINEQNIKGSIIVSDEMSAMLNPKYTFTSFVIGNSNRFAHAASLAVAESPAKAYNPLFIYGGVGLGKTHLMHAIGHHILHNNTSCKVVYVSSEKFTNELINSIKDDKNVEFRSKYRNIDVLLIDDIQFIAGKERTQEEFFHTFNALYEANKQIILSSDRPPKEIPTLEDRLRSRFEWGLIADIQPPDFETRMAILKKKADVEKLNIPNEVMAYIATKIKSNIRELEGALIRIVAFSSLTNKEISVDLAIEALKDIISSGQSKQVTIELIQDVVSNYYNLKVSDFKSSRRTRNVAFPRQIAMYLCRKLTDMSLPKIGEEFGGRDHTTVIHAYEKISNNLKKDESLKNAVNDLTKRLDQQ</sequence>